<gene>
    <name type="primary">UNG</name>
    <name type="ordered locus">FPV062</name>
    <name type="ORF">FPD4</name>
</gene>
<organism>
    <name type="scientific">Fowlpox virus (strain NVSL)</name>
    <name type="common">FPV</name>
    <dbReference type="NCBI Taxonomy" id="928301"/>
    <lineage>
        <taxon>Viruses</taxon>
        <taxon>Varidnaviria</taxon>
        <taxon>Bamfordvirae</taxon>
        <taxon>Nucleocytoviricota</taxon>
        <taxon>Pokkesviricetes</taxon>
        <taxon>Chitovirales</taxon>
        <taxon>Poxviridae</taxon>
        <taxon>Chordopoxvirinae</taxon>
        <taxon>Avipoxvirus</taxon>
        <taxon>Fowlpox virus</taxon>
    </lineage>
</organism>
<comment type="function">
    <text evidence="1">Excises uracil residues from the DNA which can arise as a result of misincorporation of dUMP residues by DNA polymerase or due to deamination of cytosine. Also part of a heterodimeric processivity factor which potentiates the DNA polymerase activity. Binds to DNA (By similarity).</text>
</comment>
<comment type="catalytic activity">
    <reaction>
        <text>Hydrolyzes single-stranded DNA or mismatched double-stranded DNA and polynucleotides, releasing free uracil.</text>
        <dbReference type="EC" id="3.2.2.27"/>
    </reaction>
</comment>
<comment type="subunit">
    <text evidence="1">Homodimer. Interacts with protein A20. Component of the Uracil-DNA glycosylase(UDG)-A20-polymerase complex; A20 and UDG form a heterodimeric processivity factor that associates with E9 to form the processive polymerase holoenzyme (By similarity).</text>
</comment>
<comment type="similarity">
    <text evidence="3">Belongs to the uracil-DNA glycosylase (UDG) superfamily. UNG family.</text>
</comment>
<organismHost>
    <name type="scientific">Vertebrata</name>
    <dbReference type="NCBI Taxonomy" id="7742"/>
</organismHost>
<proteinExistence type="inferred from homology"/>
<sequence length="218" mass="25593">MKTLKLNNWPYPIEYHEDWENIINHISDVIEETGPWLLEENTSPSHENIFKQLKQSLKDKRVCIVGIDPYPTDATGVPFESPDFSKKTIKAIAENISRRYNVRLFKNYNFLFVEGVLAWNYYLSCREGETKSHKIFWERLADVFINHIAAYVSVFYFLGKSDFSNFRSILNSPTTVVVGYHPAARNRQFDTDETFEIVNTLLELKNEPRINWVQGFEI</sequence>
<dbReference type="EC" id="3.2.2.27"/>
<dbReference type="EMBL" id="X17202">
    <property type="protein sequence ID" value="CAA35064.1"/>
    <property type="molecule type" value="Genomic_DNA"/>
</dbReference>
<dbReference type="EMBL" id="AF198100">
    <property type="protein sequence ID" value="AAF44406.1"/>
    <property type="molecule type" value="Genomic_DNA"/>
</dbReference>
<dbReference type="PIR" id="A35216">
    <property type="entry name" value="A35216"/>
</dbReference>
<dbReference type="RefSeq" id="NP_039025.1">
    <property type="nucleotide sequence ID" value="NC_002188.1"/>
</dbReference>
<dbReference type="SMR" id="P21968"/>
<dbReference type="GeneID" id="1486610"/>
<dbReference type="KEGG" id="vg:1486610"/>
<dbReference type="Proteomes" id="UP000008597">
    <property type="component" value="Segment"/>
</dbReference>
<dbReference type="GO" id="GO:0003677">
    <property type="term" value="F:DNA binding"/>
    <property type="evidence" value="ECO:0007669"/>
    <property type="project" value="UniProtKB-KW"/>
</dbReference>
<dbReference type="GO" id="GO:0004844">
    <property type="term" value="F:uracil DNA N-glycosylase activity"/>
    <property type="evidence" value="ECO:0007669"/>
    <property type="project" value="UniProtKB-EC"/>
</dbReference>
<dbReference type="GO" id="GO:0097510">
    <property type="term" value="P:base-excision repair, AP site formation via deaminated base removal"/>
    <property type="evidence" value="ECO:0007669"/>
    <property type="project" value="TreeGrafter"/>
</dbReference>
<dbReference type="CDD" id="cd19372">
    <property type="entry name" value="UDG_F1_VAVC_D4-like"/>
    <property type="match status" value="1"/>
</dbReference>
<dbReference type="Gene3D" id="3.40.470.10">
    <property type="entry name" value="Uracil-DNA glycosylase-like domain"/>
    <property type="match status" value="1"/>
</dbReference>
<dbReference type="InterPro" id="IPR002043">
    <property type="entry name" value="UDG_fam1"/>
</dbReference>
<dbReference type="InterPro" id="IPR018085">
    <property type="entry name" value="Ura-DNA_Glyclase_AS"/>
</dbReference>
<dbReference type="InterPro" id="IPR005122">
    <property type="entry name" value="Uracil-DNA_glycosylase-like"/>
</dbReference>
<dbReference type="InterPro" id="IPR036895">
    <property type="entry name" value="Uracil-DNA_glycosylase-like_sf"/>
</dbReference>
<dbReference type="PANTHER" id="PTHR11264">
    <property type="entry name" value="URACIL-DNA GLYCOSYLASE"/>
    <property type="match status" value="1"/>
</dbReference>
<dbReference type="PANTHER" id="PTHR11264:SF0">
    <property type="entry name" value="URACIL-DNA GLYCOSYLASE"/>
    <property type="match status" value="1"/>
</dbReference>
<dbReference type="Pfam" id="PF03167">
    <property type="entry name" value="UDG"/>
    <property type="match status" value="1"/>
</dbReference>
<dbReference type="SUPFAM" id="SSF52141">
    <property type="entry name" value="Uracil-DNA glycosylase-like"/>
    <property type="match status" value="1"/>
</dbReference>
<dbReference type="PROSITE" id="PS00130">
    <property type="entry name" value="U_DNA_GLYCOSYLASE"/>
    <property type="match status" value="1"/>
</dbReference>
<protein>
    <recommendedName>
        <fullName>Uracil-DNA glycosylase</fullName>
        <shortName>UDG</shortName>
        <ecNumber>3.2.2.27</ecNumber>
    </recommendedName>
</protein>
<reference key="1">
    <citation type="journal article" date="1990" name="J. Gen. Virol.">
        <title>Nucleotide sequence analysis of a 10.5 kbp HindIII fragment of fowlpox virus: relatedness to the central portion of the vaccinia virus HindIII D region.</title>
        <authorList>
            <person name="Tartaglia J."/>
            <person name="Winslow J."/>
            <person name="Goebel S.J."/>
            <person name="Johnson G.P."/>
            <person name="Taylor J."/>
            <person name="Paoletti E."/>
        </authorList>
    </citation>
    <scope>NUCLEOTIDE SEQUENCE [GENOMIC DNA]</scope>
    <source>
        <strain>FP-1</strain>
    </source>
</reference>
<reference key="2">
    <citation type="journal article" date="2000" name="J. Virol.">
        <title>The genome of fowlpox virus.</title>
        <authorList>
            <person name="Afonso C.L."/>
            <person name="Tulman E.R."/>
            <person name="Lu Z."/>
            <person name="Zsak L."/>
            <person name="Kutish G.F."/>
            <person name="Rock D.L."/>
        </authorList>
    </citation>
    <scope>NUCLEOTIDE SEQUENCE [LARGE SCALE GENOMIC DNA]</scope>
</reference>
<evidence type="ECO:0000250" key="1"/>
<evidence type="ECO:0000255" key="2">
    <source>
        <dbReference type="PROSITE-ProRule" id="PRU10072"/>
    </source>
</evidence>
<evidence type="ECO:0000305" key="3"/>
<name>UNG_FOWPN</name>
<accession>P21968</accession>
<accession>Q9J5E9</accession>
<keyword id="KW-0227">DNA damage</keyword>
<keyword id="KW-0234">DNA repair</keyword>
<keyword id="KW-0238">DNA-binding</keyword>
<keyword id="KW-0378">Hydrolase</keyword>
<keyword id="KW-1185">Reference proteome</keyword>
<feature type="chain" id="PRO_0000176177" description="Uracil-DNA glycosylase">
    <location>
        <begin position="1"/>
        <end position="218"/>
    </location>
</feature>
<feature type="active site" description="Proton acceptor" evidence="2">
    <location>
        <position position="68"/>
    </location>
</feature>
<feature type="sequence conflict" description="In Ref. 1; CAA35064." evidence="3" ref="1">
    <original>T</original>
    <variation>A</variation>
    <location>
        <position position="130"/>
    </location>
</feature>